<sequence>MSQTNANDLRNNEVFFISPSNNTNKVLDKISQSEVKLWNKLSGANQKWRLIYDTNKQAYKIKVMDNTSLILTWNAPLSSVSVKTDTNGDNQYWYLLQNYISRNVIIRNYMNPNLVLQYNIDDTLMVSTQTSSSNQFFKFSNCIYEALNNRNCKLQTQLNSDRFLSKNLNSQIIVLWQWFDSSRQKWIIEYNETKSAYTLKCQENNRYLTWIQNSNNYVETYQSTDSLIQYWNINYLDNDASKYILYNLQDTNRVLDVYNSQIANGTHVIVDSYHGNTNQQWIINLI</sequence>
<reference key="1">
    <citation type="journal article" date="1990" name="Infect. Immun.">
        <title>Cloning and complete nucleotide sequence of the gene for the main component of hemagglutinin produced by Clostridium botulinum type C.</title>
        <authorList>
            <person name="Tsuzuki K."/>
            <person name="Kimura K."/>
            <person name="Fujii N."/>
            <person name="Yokosawa N."/>
            <person name="Indoh T."/>
            <person name="Murakami T."/>
            <person name="Oguma K."/>
        </authorList>
    </citation>
    <scope>NUCLEOTIDE SEQUENCE [GENOMIC DNA]</scope>
    <scope>PROTEIN SEQUENCE OF 2-21</scope>
    <scope>FUNCTION IN AGGLUTINATION OF ERYTHROCYTES</scope>
    <scope>SUBCELLULAR LOCATION</scope>
    <source>
        <strain>Stockholm / Type C / phage C-ST</strain>
    </source>
</reference>
<reference key="2">
    <citation type="journal article" date="1995" name="Toxicon">
        <title>Botulinal neurotoxin C1 complex genes, clostridial neurotoxin homology and genetic transfer in Clostridium botulinum.</title>
        <authorList>
            <person name="Hauser D."/>
            <person name="Gibert M."/>
            <person name="Marvaud J.C."/>
            <person name="Eklund M.W."/>
            <person name="Popoff M.R."/>
        </authorList>
    </citation>
    <scope>NUCLEOTIDE SEQUENCE [GENOMIC DNA]</scope>
    <source>
        <strain>C-468 / Type C</strain>
    </source>
</reference>
<reference key="3">
    <citation type="submission" date="2000-01" db="EMBL/GenBank/DDBJ databases">
        <title>Organization of gene encoding components of the botulinum progenitor toxin in Clostridium botulinum type C strain 6814: evidence of chimeric sequence in the gene encoding each component.</title>
        <authorList>
            <person name="Sagane Y."/>
            <person name="Watanabe T."/>
            <person name="Kouguchi H."/>
            <person name="Yamamoto T."/>
            <person name="Kawabe T."/>
            <person name="Murakami F."/>
            <person name="Nakatsuka M."/>
            <person name="Ohyama T."/>
        </authorList>
    </citation>
    <scope>NUCLEOTIDE SEQUENCE [GENOMIC DNA]</scope>
    <source>
        <strain>C-6814 / Type C</strain>
    </source>
</reference>
<reference key="4">
    <citation type="journal article" date="1994" name="Biochem. Biophys. Res. Commun.">
        <title>Molecular construction of Clostridium botulinum type C progenitor toxin and its gene organization.</title>
        <authorList>
            <person name="Fujinaga Y."/>
            <person name="Inoue K."/>
            <person name="Shimazaki S."/>
            <person name="Tomochika K."/>
            <person name="Tsuzuki K."/>
            <person name="Fujii N."/>
            <person name="Watanabe T."/>
            <person name="Ohyama T."/>
            <person name="Takeshi K."/>
            <person name="Inoue K."/>
            <person name="Oguma K."/>
        </authorList>
    </citation>
    <scope>NUCLEOTIDE SEQUENCE [GENOMIC DNA] OF 269-286</scope>
    <scope>SUBUNIT</scope>
    <scope>SUBCELLULAR LOCATION</scope>
    <source>
        <strain>Stockholm / Type C / phage C-ST</strain>
    </source>
</reference>
<reference key="5">
    <citation type="journal article" date="1997" name="Microbiology">
        <title>The haemagglutinin of Clostridium botulinum type C progenitor toxin plays an essential role in binding of toxin to the epithelial cells of guinea pig small intestine, leading to the efficient absorption of the toxin.</title>
        <authorList>
            <person name="Fujinaga Y."/>
            <person name="Inoue K."/>
            <person name="Watanabe S."/>
            <person name="Yokota K."/>
            <person name="Hirai Y."/>
            <person name="Nagamachi E."/>
            <person name="Oguma K."/>
        </authorList>
    </citation>
    <scope>FUNCTION IN TOXICITY</scope>
    <source>
        <strain>Stockholm / Type C</strain>
    </source>
</reference>
<reference key="6">
    <citation type="journal article" date="2003" name="Microbiology">
        <title>Structural analysis by X-ray crystallography and calorimetry of a haemagglutinin component (HA1) of the progenitor toxin from Clostridium botulinum.</title>
        <authorList>
            <person name="Inoue K."/>
            <person name="Sobhany M."/>
            <person name="Transue T.R."/>
            <person name="Oguma K."/>
            <person name="Pedersen L.C."/>
            <person name="Negishi M."/>
        </authorList>
    </citation>
    <scope>X-RAY CRYSTALLOGRAPHY (1.7 ANGSTROMS)</scope>
    <scope>FUNCTION IN SUGAR-BINDING</scope>
    <scope>DOMAIN</scope>
    <source>
        <strain>Stockholm / Type C</strain>
    </source>
</reference>
<reference evidence="17 18 19" key="7">
    <citation type="journal article" date="2008" name="J. Mol. Biol.">
        <title>Sugar-binding sites of the HA1 subcomponent of Clostridium botulinum type C progenitor toxin.</title>
        <authorList>
            <person name="Nakamura T."/>
            <person name="Tonozuka T."/>
            <person name="Ide A."/>
            <person name="Yuzawa T."/>
            <person name="Oguma K."/>
            <person name="Nishikawa A."/>
        </authorList>
    </citation>
    <scope>X-RAY CRYSTALLOGRAPHY (1.70 ANGSTROMS) IN COMPLEX WITH GALACTOSE; N-ACETYL-BETA-NEURAMIC ACID AND N-ACETYL-D-GALACTOSAMINE</scope>
    <scope>FUNCTION IN MUCIN-BINDING</scope>
    <scope>SUGAR-BINDING</scope>
    <scope>DOMAIN</scope>
    <scope>MUTAGENESIS OF TRP-176</scope>
</reference>
<reference evidence="20 21" key="8">
    <citation type="journal article" date="2011" name="Arch. Biochem. Biophys.">
        <title>Molecular diversity of the two sugar-binding sites of the beta-trefoil lectin HA33/C (HA1) from Clostridium botulinum type C neurotoxin.</title>
        <authorList>
            <person name="Nakamura T."/>
            <person name="Tonozuka T."/>
            <person name="Ito S."/>
            <person name="Takeda Y."/>
            <person name="Sato R."/>
            <person name="Matsuo I."/>
            <person name="Ito Y."/>
            <person name="Oguma K."/>
            <person name="Nishikawa A."/>
        </authorList>
    </citation>
    <scope>X-RAY CRYSTALLOGRAPHY (1.48 ANGSTROMS) IN COMPLEX WITH N-ACETYL-D-GALACTOSAMINE</scope>
    <scope>FUNCTION IN MUCIN-BINDING</scope>
    <scope>SUGAR-BINDING</scope>
    <scope>DOMAIN</scope>
    <scope>MUTAGENESIS OF TRP-176; PHE-179; ASP-271 AND 278-ASN-GLN-279</scope>
</reference>
<proteinExistence type="evidence at protein level"/>
<accession>P0DPR0</accession>
<accession>P46084</accession>
<accession>Q9LBR3</accession>
<accession>Q9LBS9</accession>
<accession>Q9ZWV4</accession>
<comment type="function">
    <text evidence="3 4 5 6 8 16">Agglutinates human erythrocytes (PubMed:2205574). The hemagglutinin (HA) component of the progenitor toxin protects the structural integrity of botulinum neurotoxin; may increase internalization of the neurotoxin into the bloodstream of the host (PubMed:9421908). The hemagglutinin (HA) component is involved in binding to the upper small intestine through interactions with glycolipids and glycoproteins containing sialic acid moieties (Probable). Binds galactose or oligosaccharides with galactose at their non-reducing end (PubMed:14663070). Binds eukaryotic host mucins; binding is inhibited by N-acetyl-beta-neuraminic acid, N-acetyl-D-galactosamine, galactose, and methyl N-acetyl-beta-neuraminic acid (PubMed:18178224). Binds N-acetyl-beta-neuraminic acid, N-acetyl-D-galactosamine and galactose (but not glucose) via 2 sites (PubMed:18178224, PubMed:21640703).</text>
</comment>
<comment type="subunit">
    <text evidence="1 7 15">Botulinum toxins are produced as progenitor toxins of large molecular sizes of 12S (M toxin) and 16S (L toxin). M toxin consists of a non-toxic, non-hemagglutinin component (NTNHA) and the neurotoxin (Probable). L toxin consists of the M toxin and the 3 subcomponents of hemagglutinin (HA) (PubMed:7802661). HA is composed of subcomponents of 70, 33, and 17 kDa (PubMed:7802661). The 70 kDa subcomponent undergoes proteolytic processing and is split into HA-55 (also called HA-53 and HA3b) and HA-22-23 (also called HA3a) (PubMed:7802661). The stoichiometry of the whole complex has been modeled as one BoNT/C, one NTNHA, three HA-70, six HA-33 and three HA-17 (By similarity).</text>
</comment>
<comment type="subcellular location">
    <subcellularLocation>
        <location evidence="6 7">Secreted</location>
    </subcellularLocation>
</comment>
<comment type="domain">
    <text evidence="4 5 12 13 14">Arranged in 2 beta-trefoil domains (called 1 and 2) each with three tandemly repeated subdomains (called alpha, beta and gamma) joined by a short alpha-helix (Probable). Only subdomains 2-alpha and 2-gamma, in the C-terminal beta-trefoil domain, possess a functional carbohydrate-binding site (PubMed:18178224, PubMed:21640703).</text>
</comment>
<comment type="miscellaneous">
    <text evidence="11">This protein can also be encoded on a prophage.</text>
</comment>
<feature type="initiator methionine" description="Removed" evidence="6">
    <location>
        <position position="1"/>
    </location>
</feature>
<feature type="chain" id="PRO_0000083886" description="Main hemagglutinin component type C">
    <location>
        <begin position="2"/>
        <end position="286"/>
    </location>
</feature>
<feature type="repeat" description="1-alpha" evidence="12">
    <location>
        <begin position="2"/>
        <end position="55"/>
    </location>
</feature>
<feature type="domain" description="Ricin B-type lectin 1" evidence="2">
    <location>
        <begin position="12"/>
        <end position="140"/>
    </location>
</feature>
<feature type="repeat" description="1-beta" evidence="12">
    <location>
        <begin position="56"/>
        <end position="100"/>
    </location>
</feature>
<feature type="repeat" description="1-gamma" evidence="12">
    <location>
        <begin position="101"/>
        <end position="148"/>
    </location>
</feature>
<feature type="repeat" description="2-alpha" evidence="12 13 14">
    <location>
        <begin position="149"/>
        <end position="193"/>
    </location>
</feature>
<feature type="domain" description="Ricin B-type lectin 2" evidence="2">
    <location>
        <begin position="180"/>
        <end position="284"/>
    </location>
</feature>
<feature type="repeat" description="2-beta" evidence="12 13 14">
    <location>
        <begin position="194"/>
        <end position="239"/>
    </location>
</feature>
<feature type="repeat" description="2-gamma" evidence="12 13 14">
    <location>
        <begin position="240"/>
        <end position="286"/>
    </location>
</feature>
<feature type="region of interest" description="Sugar-binding site 1" evidence="4">
    <location>
        <begin position="167"/>
        <end position="183"/>
    </location>
</feature>
<feature type="region of interest" description="Sugar-binding site 2" evidence="4 5">
    <location>
        <begin position="256"/>
        <end position="279"/>
    </location>
</feature>
<feature type="sequence variant" description="In strain: Type C / C-6814.">
    <original>N</original>
    <variation>S</variation>
    <location>
        <position position="22"/>
    </location>
</feature>
<feature type="sequence variant" description="In strain: Type C / C-6814.">
    <original>NKLSGA</original>
    <variation>SKNLGS</variation>
    <location>
        <begin position="39"/>
        <end position="44"/>
    </location>
</feature>
<feature type="sequence variant" description="In strain: Type C / C-6814.">
    <original>N</original>
    <variation>D</variation>
    <location>
        <position position="74"/>
    </location>
</feature>
<feature type="sequence variant" description="In strain: Type C / C-6814.">
    <original>GD</original>
    <variation>TN</variation>
    <location>
        <begin position="88"/>
        <end position="89"/>
    </location>
</feature>
<feature type="sequence variant" description="In strain: Type C / C-6814.">
    <original>N</original>
    <variation>D</variation>
    <location>
        <position position="98"/>
    </location>
</feature>
<feature type="sequence variant" description="In strain: Type C / C-6814.">
    <original>I</original>
    <variation>L</variation>
    <location>
        <position position="106"/>
    </location>
</feature>
<feature type="sequence variant" description="In strain: Type C / C-6814.">
    <original>I</original>
    <variation>T</variation>
    <location>
        <position position="120"/>
    </location>
</feature>
<feature type="sequence variant" description="In strain: Type C / C-6814.">
    <original>M</original>
    <variation>I</variation>
    <location>
        <position position="125"/>
    </location>
</feature>
<feature type="sequence variant" description="In strain: Type C / C-6814.">
    <original>S</original>
    <variation>N</variation>
    <location>
        <position position="133"/>
    </location>
</feature>
<feature type="sequence variant" description="In strain: Type C / C-6814.">
    <original>H</original>
    <variation>N</variation>
    <location>
        <position position="267"/>
    </location>
</feature>
<feature type="mutagenesis site" description="Significantly decreased binding to bovine mucin, decreased binding to porcine mucin. No binding of N-acetyl-beta-neuraminic acid, significantly decreased binding to N-acetyl-D-galactosamine. Significantly decreased binding to both bovine and porcine mucin; when associated with A-278-279-A." evidence="4 5">
    <original>W</original>
    <variation>A</variation>
    <location>
        <position position="176"/>
    </location>
</feature>
<feature type="mutagenesis site" description="Decreased binding to bovine mucin, no change in binding to porcine mucin. No binding of N-acetyl-beta-neuraminic acid, significantly decreased binding to N-acetyl-D-galactosamine." evidence="5">
    <original>F</original>
    <variation>I</variation>
    <location>
        <position position="179"/>
    </location>
</feature>
<feature type="mutagenesis site" description="No binding of N-acetyl-beta-neuraminic acid, increased binding to N-acetyl-D-galactosamine and galactose; when associated with A-176." evidence="5">
    <original>D</original>
    <variation>F</variation>
    <location>
        <position position="271"/>
    </location>
</feature>
<feature type="mutagenesis site" description="Decreased binding to both bovine and porcine mucin, no binding to N-acetyl-D-galactosamine, increased affinity for N-acetyl-beta-neuraminic acid. Significantly decreased binding to both bovine and porcine mucin; when associated with A-176." evidence="5">
    <original>NQ</original>
    <variation>AA</variation>
    <location>
        <begin position="278"/>
        <end position="279"/>
    </location>
</feature>
<feature type="strand" evidence="23">
    <location>
        <begin position="14"/>
        <end position="19"/>
    </location>
</feature>
<feature type="strand" evidence="23">
    <location>
        <begin position="25"/>
        <end position="29"/>
    </location>
</feature>
<feature type="strand" evidence="23">
    <location>
        <begin position="31"/>
        <end position="33"/>
    </location>
</feature>
<feature type="strand" evidence="23">
    <location>
        <begin position="35"/>
        <end position="39"/>
    </location>
</feature>
<feature type="helix" evidence="23">
    <location>
        <begin position="44"/>
        <end position="46"/>
    </location>
</feature>
<feature type="strand" evidence="23">
    <location>
        <begin position="48"/>
        <end position="53"/>
    </location>
</feature>
<feature type="turn" evidence="23">
    <location>
        <begin position="54"/>
        <end position="57"/>
    </location>
</feature>
<feature type="strand" evidence="23">
    <location>
        <begin position="58"/>
        <end position="67"/>
    </location>
</feature>
<feature type="strand" evidence="23">
    <location>
        <begin position="70"/>
        <end position="73"/>
    </location>
</feature>
<feature type="strand" evidence="23">
    <location>
        <begin position="80"/>
        <end position="83"/>
    </location>
</feature>
<feature type="helix" evidence="23">
    <location>
        <begin position="89"/>
        <end position="91"/>
    </location>
</feature>
<feature type="strand" evidence="23">
    <location>
        <begin position="93"/>
        <end position="97"/>
    </location>
</feature>
<feature type="turn" evidence="23">
    <location>
        <begin position="99"/>
        <end position="101"/>
    </location>
</feature>
<feature type="strand" evidence="23">
    <location>
        <begin position="104"/>
        <end position="110"/>
    </location>
</feature>
<feature type="strand" evidence="23">
    <location>
        <begin position="114"/>
        <end position="118"/>
    </location>
</feature>
<feature type="strand" evidence="23">
    <location>
        <begin position="124"/>
        <end position="128"/>
    </location>
</feature>
<feature type="helix" evidence="23">
    <location>
        <begin position="133"/>
        <end position="135"/>
    </location>
</feature>
<feature type="strand" evidence="23">
    <location>
        <begin position="137"/>
        <end position="141"/>
    </location>
</feature>
<feature type="helix" evidence="23">
    <location>
        <begin position="142"/>
        <end position="147"/>
    </location>
</feature>
<feature type="strand" evidence="23">
    <location>
        <begin position="150"/>
        <end position="156"/>
    </location>
</feature>
<feature type="strand" evidence="23">
    <location>
        <begin position="163"/>
        <end position="166"/>
    </location>
</feature>
<feature type="strand" evidence="23">
    <location>
        <begin position="170"/>
        <end position="176"/>
    </location>
</feature>
<feature type="helix" evidence="23">
    <location>
        <begin position="182"/>
        <end position="184"/>
    </location>
</feature>
<feature type="strand" evidence="23">
    <location>
        <begin position="186"/>
        <end position="191"/>
    </location>
</feature>
<feature type="turn" evidence="23">
    <location>
        <begin position="192"/>
        <end position="195"/>
    </location>
</feature>
<feature type="strand" evidence="23">
    <location>
        <begin position="196"/>
        <end position="201"/>
    </location>
</feature>
<feature type="turn" evidence="23">
    <location>
        <begin position="202"/>
        <end position="204"/>
    </location>
</feature>
<feature type="strand" evidence="23">
    <location>
        <begin position="207"/>
        <end position="210"/>
    </location>
</feature>
<feature type="strand" evidence="22">
    <location>
        <begin position="213"/>
        <end position="215"/>
    </location>
</feature>
<feature type="strand" evidence="23">
    <location>
        <begin position="217"/>
        <end position="221"/>
    </location>
</feature>
<feature type="helix" evidence="23">
    <location>
        <begin position="227"/>
        <end position="229"/>
    </location>
</feature>
<feature type="strand" evidence="23">
    <location>
        <begin position="231"/>
        <end position="236"/>
    </location>
</feature>
<feature type="strand" evidence="23">
    <location>
        <begin position="239"/>
        <end position="247"/>
    </location>
</feature>
<feature type="strand" evidence="23">
    <location>
        <begin position="250"/>
        <end position="257"/>
    </location>
</feature>
<feature type="helix" evidence="23">
    <location>
        <begin position="258"/>
        <end position="260"/>
    </location>
</feature>
<feature type="strand" evidence="23">
    <location>
        <begin position="267"/>
        <end position="272"/>
    </location>
</feature>
<feature type="helix" evidence="23">
    <location>
        <begin position="277"/>
        <end position="279"/>
    </location>
</feature>
<feature type="strand" evidence="23">
    <location>
        <begin position="281"/>
        <end position="285"/>
    </location>
</feature>
<name>HA33C_CBCP</name>
<keyword id="KW-0002">3D-structure</keyword>
<keyword id="KW-0903">Direct protein sequencing</keyword>
<keyword id="KW-0348">Hemagglutinin</keyword>
<keyword id="KW-0430">Lectin</keyword>
<keyword id="KW-0677">Repeat</keyword>
<keyword id="KW-0964">Secreted</keyword>
<keyword id="KW-0843">Virulence</keyword>
<protein>
    <recommendedName>
        <fullName evidence="9">Main hemagglutinin component type C</fullName>
    </recommendedName>
    <alternativeName>
        <fullName evidence="10">ANTP33</fullName>
    </alternativeName>
    <alternativeName>
        <fullName evidence="9">HA 33 kDa subunit</fullName>
    </alternativeName>
    <alternativeName>
        <fullName>HA1</fullName>
    </alternativeName>
</protein>
<dbReference type="EMBL" id="X62389">
    <property type="protein sequence ID" value="CAA44261.1"/>
    <property type="molecule type" value="Genomic_DNA"/>
</dbReference>
<dbReference type="EMBL" id="X53041">
    <property type="protein sequence ID" value="CAA37210.1"/>
    <property type="molecule type" value="Genomic_DNA"/>
</dbReference>
<dbReference type="EMBL" id="X66433">
    <property type="protein sequence ID" value="CAA47058.1"/>
    <property type="molecule type" value="Genomic_DNA"/>
</dbReference>
<dbReference type="EMBL" id="AB037166">
    <property type="protein sequence ID" value="BAA89711.1"/>
    <property type="molecule type" value="Genomic_DNA"/>
</dbReference>
<dbReference type="EMBL" id="S74768">
    <property type="protein sequence ID" value="AAB32847.1"/>
    <property type="molecule type" value="Genomic_DNA"/>
</dbReference>
<dbReference type="RefSeq" id="YP_398514.1">
    <property type="nucleotide sequence ID" value="NC_007581.1"/>
</dbReference>
<dbReference type="PDB" id="1QXM">
    <property type="method" value="X-ray"/>
    <property type="resolution" value="1.70 A"/>
    <property type="chains" value="A/B=1-286"/>
</dbReference>
<dbReference type="PDB" id="3AH1">
    <property type="method" value="X-ray"/>
    <property type="resolution" value="2.20 A"/>
    <property type="chains" value="A/B=1-286"/>
</dbReference>
<dbReference type="PDB" id="3AH2">
    <property type="method" value="X-ray"/>
    <property type="resolution" value="1.70 A"/>
    <property type="chains" value="A/B=1-286"/>
</dbReference>
<dbReference type="PDB" id="3AH4">
    <property type="method" value="X-ray"/>
    <property type="resolution" value="1.78 A"/>
    <property type="chains" value="A/B=1-286"/>
</dbReference>
<dbReference type="PDB" id="3AJ5">
    <property type="method" value="X-ray"/>
    <property type="resolution" value="1.80 A"/>
    <property type="chains" value="A/B=1-286"/>
</dbReference>
<dbReference type="PDB" id="3AJ6">
    <property type="method" value="X-ray"/>
    <property type="resolution" value="1.48 A"/>
    <property type="chains" value="A/B=1-286"/>
</dbReference>
<dbReference type="PDBsum" id="1QXM"/>
<dbReference type="PDBsum" id="3AH1"/>
<dbReference type="PDBsum" id="3AH2"/>
<dbReference type="PDBsum" id="3AH4"/>
<dbReference type="PDBsum" id="3AJ5"/>
<dbReference type="PDBsum" id="3AJ6"/>
<dbReference type="SMR" id="P0DPR0"/>
<dbReference type="UniLectin" id="P0DPR0"/>
<dbReference type="KEGG" id="vg:3772939"/>
<dbReference type="EvolutionaryTrace" id="P0DPR0"/>
<dbReference type="GO" id="GO:0005576">
    <property type="term" value="C:extracellular region"/>
    <property type="evidence" value="ECO:0007669"/>
    <property type="project" value="UniProtKB-SubCell"/>
</dbReference>
<dbReference type="GO" id="GO:0030246">
    <property type="term" value="F:carbohydrate binding"/>
    <property type="evidence" value="ECO:0007669"/>
    <property type="project" value="UniProtKB-KW"/>
</dbReference>
<dbReference type="CDD" id="cd23495">
    <property type="entry name" value="beta-trefoil_Ricin_HA33_rpt1"/>
    <property type="match status" value="1"/>
</dbReference>
<dbReference type="CDD" id="cd23496">
    <property type="entry name" value="beta-trefoil_Ricin_HA33_rpt2"/>
    <property type="match status" value="1"/>
</dbReference>
<dbReference type="Gene3D" id="2.80.10.50">
    <property type="match status" value="2"/>
</dbReference>
<dbReference type="InterPro" id="IPR035992">
    <property type="entry name" value="Ricin_B-like_lectins"/>
</dbReference>
<dbReference type="InterPro" id="IPR000772">
    <property type="entry name" value="Ricin_B_lectin"/>
</dbReference>
<dbReference type="Pfam" id="PF14200">
    <property type="entry name" value="RicinB_lectin_2"/>
    <property type="match status" value="1"/>
</dbReference>
<dbReference type="SMART" id="SM00458">
    <property type="entry name" value="RICIN"/>
    <property type="match status" value="2"/>
</dbReference>
<dbReference type="SUPFAM" id="SSF50370">
    <property type="entry name" value="Ricin B-like lectins"/>
    <property type="match status" value="2"/>
</dbReference>
<dbReference type="PROSITE" id="PS50231">
    <property type="entry name" value="RICIN_B_LECTIN"/>
    <property type="match status" value="2"/>
</dbReference>
<gene>
    <name evidence="9" type="primary">HA-33</name>
    <name evidence="10" type="synonym">antP-33</name>
    <name type="synonym">ha1</name>
</gene>
<organismHost>
    <name type="scientific">Clostridium botulinum C</name>
    <dbReference type="NCBI Taxonomy" id="36828"/>
</organismHost>
<organism>
    <name type="scientific">Clostridium botulinum C phage</name>
    <name type="common">Clostridium botulinum C bacteriophage</name>
    <dbReference type="NCBI Taxonomy" id="12336"/>
    <lineage>
        <taxon>Viruses</taxon>
        <taxon>Duplodnaviria</taxon>
        <taxon>Heunggongvirae</taxon>
        <taxon>Uroviricota</taxon>
        <taxon>Caudoviricetes</taxon>
    </lineage>
</organism>
<evidence type="ECO:0000250" key="1">
    <source>
        <dbReference type="UniProtKB" id="P0DPR1"/>
    </source>
</evidence>
<evidence type="ECO:0000255" key="2">
    <source>
        <dbReference type="PROSITE-ProRule" id="PRU00174"/>
    </source>
</evidence>
<evidence type="ECO:0000269" key="3">
    <source>
    </source>
</evidence>
<evidence type="ECO:0000269" key="4">
    <source>
    </source>
</evidence>
<evidence type="ECO:0000269" key="5">
    <source>
    </source>
</evidence>
<evidence type="ECO:0000269" key="6">
    <source>
    </source>
</evidence>
<evidence type="ECO:0000269" key="7">
    <source>
    </source>
</evidence>
<evidence type="ECO:0000269" key="8">
    <source>
    </source>
</evidence>
<evidence type="ECO:0000303" key="9">
    <source>
    </source>
</evidence>
<evidence type="ECO:0000303" key="10">
    <source>
    </source>
</evidence>
<evidence type="ECO:0000305" key="11"/>
<evidence type="ECO:0000305" key="12">
    <source>
    </source>
</evidence>
<evidence type="ECO:0000305" key="13">
    <source>
    </source>
</evidence>
<evidence type="ECO:0000305" key="14">
    <source>
    </source>
</evidence>
<evidence type="ECO:0000305" key="15">
    <source>
    </source>
</evidence>
<evidence type="ECO:0000305" key="16">
    <source>
    </source>
</evidence>
<evidence type="ECO:0007744" key="17">
    <source>
        <dbReference type="PDB" id="3AH1"/>
    </source>
</evidence>
<evidence type="ECO:0007744" key="18">
    <source>
        <dbReference type="PDB" id="3AH2"/>
    </source>
</evidence>
<evidence type="ECO:0007744" key="19">
    <source>
        <dbReference type="PDB" id="3AH4"/>
    </source>
</evidence>
<evidence type="ECO:0007744" key="20">
    <source>
        <dbReference type="PDB" id="3AJ5"/>
    </source>
</evidence>
<evidence type="ECO:0007744" key="21">
    <source>
        <dbReference type="PDB" id="3AJ6"/>
    </source>
</evidence>
<evidence type="ECO:0007829" key="22">
    <source>
        <dbReference type="PDB" id="3AH1"/>
    </source>
</evidence>
<evidence type="ECO:0007829" key="23">
    <source>
        <dbReference type="PDB" id="3AJ6"/>
    </source>
</evidence>